<name>BAIP2_BOVIN</name>
<sequence length="521" mass="57566">MSLSRSEEMHRLTENVYKTIMEQFNPSLRNFIAMGKNYEKALAGVTYAAKGYFDALVKMGELASESQGSKELGDVLFQMAEVHRQIQNQLEEMLKSFHNELLTQLEQKVELDSRYLSAALKKYQTEQRSKGDALDKCQAELKKLRKKSQGSKNPQKYSDKELQYIDAIGNKQGELESYVSDGYKTALTEERRRFCFLVEKQCAVAKNSAAYHSKGKELLAQKLPLWQQACADPNKIPDRAVQLMQQMGNSNGSILPSGLSASKSNLVISDPIPGAKPLPVPPELAPFVGRLSAQENAPVMNGVSGPDSEDYNPWADRKATQPKSTSPPQSQSKLSDSYSNTLPVRKSVAPKNSYATTENKTLPRSSSMAAGLERNGRMRVKAIFSHAAGDNSTLLSFKEGDLITLLVPEARDGWHYGESEKTKMRGWFPFSYTRVLDNDGGDRLHMSLQQGKSSSTGNLLDKEDLALPPPDYGTSSRAFPTQTAGAFKQRPYSVAVPAFSQGLDDYGARAVSSADVEVARF</sequence>
<organism>
    <name type="scientific">Bos taurus</name>
    <name type="common">Bovine</name>
    <dbReference type="NCBI Taxonomy" id="9913"/>
    <lineage>
        <taxon>Eukaryota</taxon>
        <taxon>Metazoa</taxon>
        <taxon>Chordata</taxon>
        <taxon>Craniata</taxon>
        <taxon>Vertebrata</taxon>
        <taxon>Euteleostomi</taxon>
        <taxon>Mammalia</taxon>
        <taxon>Eutheria</taxon>
        <taxon>Laurasiatheria</taxon>
        <taxon>Artiodactyla</taxon>
        <taxon>Ruminantia</taxon>
        <taxon>Pecora</taxon>
        <taxon>Bovidae</taxon>
        <taxon>Bovinae</taxon>
        <taxon>Bos</taxon>
    </lineage>
</organism>
<accession>Q5EAD0</accession>
<feature type="chain" id="PRO_0000064814" description="BAR/IMD domain-containing adapter protein 2">
    <location>
        <begin position="1"/>
        <end position="521"/>
    </location>
</feature>
<feature type="domain" description="IMD" evidence="6">
    <location>
        <begin position="1"/>
        <end position="250"/>
    </location>
</feature>
<feature type="domain" description="SH3" evidence="5">
    <location>
        <begin position="375"/>
        <end position="438"/>
    </location>
</feature>
<feature type="region of interest" description="Disordered" evidence="7">
    <location>
        <begin position="297"/>
        <end position="370"/>
    </location>
</feature>
<feature type="region of interest" description="Disordered" evidence="7">
    <location>
        <begin position="450"/>
        <end position="471"/>
    </location>
</feature>
<feature type="coiled-coil region" evidence="4">
    <location>
        <begin position="132"/>
        <end position="153"/>
    </location>
</feature>
<feature type="compositionally biased region" description="Low complexity" evidence="7">
    <location>
        <begin position="321"/>
        <end position="333"/>
    </location>
</feature>
<feature type="compositionally biased region" description="Polar residues" evidence="7">
    <location>
        <begin position="353"/>
        <end position="368"/>
    </location>
</feature>
<feature type="modified residue" description="Phosphoserine" evidence="3">
    <location>
        <position position="262"/>
    </location>
</feature>
<feature type="modified residue" description="Phosphoserine" evidence="3">
    <location>
        <position position="324"/>
    </location>
</feature>
<feature type="modified residue" description="Phosphoserine" evidence="3">
    <location>
        <position position="326"/>
    </location>
</feature>
<feature type="modified residue" description="Phosphoserine" evidence="3">
    <location>
        <position position="337"/>
    </location>
</feature>
<feature type="modified residue" description="Phosphothreonine" evidence="3">
    <location>
        <position position="341"/>
    </location>
</feature>
<feature type="modified residue" description="Phosphoserine" evidence="3">
    <location>
        <position position="347"/>
    </location>
</feature>
<feature type="modified residue" description="Phosphothreonine" evidence="3">
    <location>
        <position position="361"/>
    </location>
</feature>
<feature type="modified residue" description="Phosphoserine" evidence="3">
    <location>
        <position position="367"/>
    </location>
</feature>
<feature type="modified residue" description="Phosphoserine" evidence="3">
    <location>
        <position position="385"/>
    </location>
</feature>
<feature type="modified residue" description="Phosphoserine" evidence="2">
    <location>
        <position position="396"/>
    </location>
</feature>
<feature type="modified residue" description="Phosphoserine" evidence="3">
    <location>
        <position position="455"/>
    </location>
</feature>
<evidence type="ECO:0000250" key="1"/>
<evidence type="ECO:0000250" key="2">
    <source>
        <dbReference type="UniProtKB" id="Q8BKX1"/>
    </source>
</evidence>
<evidence type="ECO:0000250" key="3">
    <source>
        <dbReference type="UniProtKB" id="Q9UQB8"/>
    </source>
</evidence>
<evidence type="ECO:0000255" key="4"/>
<evidence type="ECO:0000255" key="5">
    <source>
        <dbReference type="PROSITE-ProRule" id="PRU00192"/>
    </source>
</evidence>
<evidence type="ECO:0000255" key="6">
    <source>
        <dbReference type="PROSITE-ProRule" id="PRU00668"/>
    </source>
</evidence>
<evidence type="ECO:0000256" key="7">
    <source>
        <dbReference type="SAM" id="MobiDB-lite"/>
    </source>
</evidence>
<dbReference type="EMBL" id="BT020639">
    <property type="protein sequence ID" value="AAX08656.1"/>
    <property type="molecule type" value="mRNA"/>
</dbReference>
<dbReference type="RefSeq" id="NP_001017937.1">
    <property type="nucleotide sequence ID" value="NM_001017937.1"/>
</dbReference>
<dbReference type="RefSeq" id="XP_015314409.1">
    <property type="nucleotide sequence ID" value="XM_015458923.1"/>
</dbReference>
<dbReference type="RefSeq" id="XP_024835618.1">
    <property type="nucleotide sequence ID" value="XM_024979850.2"/>
</dbReference>
<dbReference type="SMR" id="Q5EAD0"/>
<dbReference type="FunCoup" id="Q5EAD0">
    <property type="interactions" value="285"/>
</dbReference>
<dbReference type="STRING" id="9913.ENSBTAP00000040235"/>
<dbReference type="PaxDb" id="9913-ENSBTAP00000040235"/>
<dbReference type="Ensembl" id="ENSBTAT00000025350.5">
    <property type="protein sequence ID" value="ENSBTAP00000025350.4"/>
    <property type="gene ID" value="ENSBTAG00000019044.6"/>
</dbReference>
<dbReference type="GeneID" id="507837"/>
<dbReference type="KEGG" id="bta:507837"/>
<dbReference type="CTD" id="10458"/>
<dbReference type="VEuPathDB" id="HostDB:ENSBTAG00000019044"/>
<dbReference type="VGNC" id="VGNC:26412">
    <property type="gene designation" value="BAIAP2"/>
</dbReference>
<dbReference type="eggNOG" id="ENOG502QUM6">
    <property type="taxonomic scope" value="Eukaryota"/>
</dbReference>
<dbReference type="GeneTree" id="ENSGT00940000153560"/>
<dbReference type="InParanoid" id="Q5EAD0"/>
<dbReference type="OrthoDB" id="3800937at2759"/>
<dbReference type="Reactome" id="R-BTA-2029482">
    <property type="pathway name" value="Regulation of actin dynamics for phagocytic cup formation"/>
</dbReference>
<dbReference type="Reactome" id="R-BTA-4420097">
    <property type="pathway name" value="VEGFA-VEGFR2 Pathway"/>
</dbReference>
<dbReference type="Reactome" id="R-BTA-5663213">
    <property type="pathway name" value="RHO GTPases Activate WASPs and WAVEs"/>
</dbReference>
<dbReference type="Reactome" id="R-BTA-9013149">
    <property type="pathway name" value="RAC1 GTPase cycle"/>
</dbReference>
<dbReference type="Reactome" id="R-BTA-9013423">
    <property type="pathway name" value="RAC3 GTPase cycle"/>
</dbReference>
<dbReference type="Proteomes" id="UP000009136">
    <property type="component" value="Chromosome 19"/>
</dbReference>
<dbReference type="Bgee" id="ENSBTAG00000019044">
    <property type="expression patterns" value="Expressed in esophagus and 101 other cell types or tissues"/>
</dbReference>
<dbReference type="GO" id="GO:0005856">
    <property type="term" value="C:cytoskeleton"/>
    <property type="evidence" value="ECO:0007669"/>
    <property type="project" value="UniProtKB-SubCell"/>
</dbReference>
<dbReference type="GO" id="GO:0005829">
    <property type="term" value="C:cytosol"/>
    <property type="evidence" value="ECO:0000250"/>
    <property type="project" value="UniProtKB"/>
</dbReference>
<dbReference type="GO" id="GO:0030175">
    <property type="term" value="C:filopodium"/>
    <property type="evidence" value="ECO:0007669"/>
    <property type="project" value="UniProtKB-SubCell"/>
</dbReference>
<dbReference type="GO" id="GO:0016020">
    <property type="term" value="C:membrane"/>
    <property type="evidence" value="ECO:0007669"/>
    <property type="project" value="UniProtKB-SubCell"/>
</dbReference>
<dbReference type="GO" id="GO:0005654">
    <property type="term" value="C:nucleoplasm"/>
    <property type="evidence" value="ECO:0000318"/>
    <property type="project" value="GO_Central"/>
</dbReference>
<dbReference type="GO" id="GO:0001726">
    <property type="term" value="C:ruffle"/>
    <property type="evidence" value="ECO:0007669"/>
    <property type="project" value="UniProtKB-SubCell"/>
</dbReference>
<dbReference type="GO" id="GO:0008093">
    <property type="term" value="F:cytoskeletal anchor activity"/>
    <property type="evidence" value="ECO:0007669"/>
    <property type="project" value="InterPro"/>
</dbReference>
<dbReference type="GO" id="GO:0070064">
    <property type="term" value="F:proline-rich region binding"/>
    <property type="evidence" value="ECO:0000250"/>
    <property type="project" value="UniProtKB"/>
</dbReference>
<dbReference type="GO" id="GO:0051764">
    <property type="term" value="P:actin crosslink formation"/>
    <property type="evidence" value="ECO:0000250"/>
    <property type="project" value="UniProtKB"/>
</dbReference>
<dbReference type="GO" id="GO:0051017">
    <property type="term" value="P:actin filament bundle assembly"/>
    <property type="evidence" value="ECO:0000250"/>
    <property type="project" value="UniProtKB"/>
</dbReference>
<dbReference type="GO" id="GO:0007009">
    <property type="term" value="P:plasma membrane organization"/>
    <property type="evidence" value="ECO:0007669"/>
    <property type="project" value="InterPro"/>
</dbReference>
<dbReference type="GO" id="GO:0030838">
    <property type="term" value="P:positive regulation of actin filament polymerization"/>
    <property type="evidence" value="ECO:0000318"/>
    <property type="project" value="GO_Central"/>
</dbReference>
<dbReference type="GO" id="GO:0032956">
    <property type="term" value="P:regulation of actin cytoskeleton organization"/>
    <property type="evidence" value="ECO:0000250"/>
    <property type="project" value="UniProtKB"/>
</dbReference>
<dbReference type="GO" id="GO:0008360">
    <property type="term" value="P:regulation of cell shape"/>
    <property type="evidence" value="ECO:0000250"/>
    <property type="project" value="UniProtKB"/>
</dbReference>
<dbReference type="CDD" id="cd07646">
    <property type="entry name" value="I-BAR_IMD_IRSp53"/>
    <property type="match status" value="1"/>
</dbReference>
<dbReference type="CDD" id="cd11915">
    <property type="entry name" value="SH3_Irsp53"/>
    <property type="match status" value="1"/>
</dbReference>
<dbReference type="FunFam" id="1.20.1270.60:FF:000011">
    <property type="entry name" value="Brain-specific angiogenesis inhibitor 1-associated protein 2"/>
    <property type="match status" value="1"/>
</dbReference>
<dbReference type="FunFam" id="2.30.30.40:FF:000018">
    <property type="entry name" value="Brain-specific angiogenesis inhibitor 1-associated protein 2"/>
    <property type="match status" value="1"/>
</dbReference>
<dbReference type="Gene3D" id="1.20.1270.60">
    <property type="entry name" value="Arfaptin homology (AH) domain/BAR domain"/>
    <property type="match status" value="1"/>
</dbReference>
<dbReference type="Gene3D" id="2.30.30.40">
    <property type="entry name" value="SH3 Domains"/>
    <property type="match status" value="1"/>
</dbReference>
<dbReference type="InterPro" id="IPR027267">
    <property type="entry name" value="AH/BAR_dom_sf"/>
</dbReference>
<dbReference type="InterPro" id="IPR030128">
    <property type="entry name" value="BAIP2_I-BAR_dom"/>
</dbReference>
<dbReference type="InterPro" id="IPR035594">
    <property type="entry name" value="BAIP2_SH3"/>
</dbReference>
<dbReference type="InterPro" id="IPR013606">
    <property type="entry name" value="I-BAR_dom"/>
</dbReference>
<dbReference type="InterPro" id="IPR027681">
    <property type="entry name" value="IRSp53/IRTKS/Pinkbar"/>
</dbReference>
<dbReference type="InterPro" id="IPR036028">
    <property type="entry name" value="SH3-like_dom_sf"/>
</dbReference>
<dbReference type="InterPro" id="IPR001452">
    <property type="entry name" value="SH3_domain"/>
</dbReference>
<dbReference type="PANTHER" id="PTHR14206">
    <property type="entry name" value="BRAIN-SPECIFIC ANGIOGENESIS INHIBITOR 1-ASSOCIATED PROTEIN 2"/>
    <property type="match status" value="1"/>
</dbReference>
<dbReference type="PANTHER" id="PTHR14206:SF3">
    <property type="entry name" value="BRAIN-SPECIFIC ANGIOGENESIS INHIBITOR 1-ASSOCIATED PROTEIN 2"/>
    <property type="match status" value="1"/>
</dbReference>
<dbReference type="Pfam" id="PF08397">
    <property type="entry name" value="IMD"/>
    <property type="match status" value="1"/>
</dbReference>
<dbReference type="Pfam" id="PF07653">
    <property type="entry name" value="SH3_2"/>
    <property type="match status" value="1"/>
</dbReference>
<dbReference type="SMART" id="SM00326">
    <property type="entry name" value="SH3"/>
    <property type="match status" value="1"/>
</dbReference>
<dbReference type="SUPFAM" id="SSF103657">
    <property type="entry name" value="BAR/IMD domain-like"/>
    <property type="match status" value="1"/>
</dbReference>
<dbReference type="SUPFAM" id="SSF50044">
    <property type="entry name" value="SH3-domain"/>
    <property type="match status" value="1"/>
</dbReference>
<dbReference type="PROSITE" id="PS51338">
    <property type="entry name" value="IMD"/>
    <property type="match status" value="1"/>
</dbReference>
<dbReference type="PROSITE" id="PS50002">
    <property type="entry name" value="SH3"/>
    <property type="match status" value="1"/>
</dbReference>
<comment type="function">
    <text evidence="1">Adapter protein that links membrane-bound small G-proteins to cytoplasmic effector proteins. Necessary for CDC42-mediated reorganization of the actin cytoskeleton and for RAC1-mediated membrane ruffling. Involved in the regulation of the actin cytoskeleton by WASF family members and the Arp2/3 complex. Plays a role in neurite growth. Acts syngeristically with ENAH to promote filipodia formation. Plays a role in the reorganization of the actin cytoskeleton in response to bacterial infection. Participates in actin bundling when associated with EPS8, promoting filopodial protrusions (By similarity).</text>
</comment>
<comment type="subunit">
    <text evidence="1">Homodimer. Interacts with CDC42 and RAC1 that have been activated by GTP binding. Interacts with ATN1, ADGRB1, DIAPH1, EPS8, SHANK1, SHANK2, SHANK3, TIAM1, WASF1 and WASF2. Interacts with ENAH after recruitment of CDC42 (By similarity).</text>
</comment>
<comment type="subcellular location">
    <subcellularLocation>
        <location evidence="1">Cytoplasm</location>
    </subcellularLocation>
    <subcellularLocation>
        <location evidence="1">Membrane</location>
        <topology evidence="1">Peripheral membrane protein</topology>
    </subcellularLocation>
    <subcellularLocation>
        <location evidence="1">Cell projection</location>
        <location evidence="1">Filopodium</location>
    </subcellularLocation>
    <subcellularLocation>
        <location evidence="1">Cell projection</location>
        <location evidence="1">Ruffle</location>
    </subcellularLocation>
    <subcellularLocation>
        <location evidence="1">Cytoplasm</location>
        <location evidence="1">Cytoskeleton</location>
    </subcellularLocation>
    <text evidence="1">Detected throughout the cytoplasm in the absence of specific binding partners. Detected in filopodia and close to membrane ruffles. Recruited to actin pedestals that are formed upon infection by bacteria at bacterial attachment sites (By similarity).</text>
</comment>
<comment type="domain">
    <text evidence="1">The IMD domain forms a coiled coil. The isolated domain can induce actin bundling and filopodia formation. In the absence of G-proteins intramolecular interaction between the IMD and the SH3 domain gives rise to an auto-inhibited state of the protein. Interaction of the IMD with RAC1 or CDC42 leads to activation (By similarity).</text>
</comment>
<comment type="domain">
    <text evidence="1">The SH3 domain interacts with ATN1, ADGRB1, WASF1, WASF2, SHANK1, DIAPH1 and ENAH.</text>
</comment>
<comment type="PTM">
    <text evidence="1">Phosphorylated on tyrosine residues by INSR in response to insulin treatment.</text>
</comment>
<protein>
    <recommendedName>
        <fullName evidence="3">BAR/IMD domain-containing adapter protein 2</fullName>
    </recommendedName>
    <alternativeName>
        <fullName>Brain-specific angiogenesis inhibitor 1-associated protein 2</fullName>
        <shortName>BAI-associated protein 2</shortName>
        <shortName>BAI1-associated protein 2</shortName>
    </alternativeName>
</protein>
<keyword id="KW-0966">Cell projection</keyword>
<keyword id="KW-0175">Coiled coil</keyword>
<keyword id="KW-0963">Cytoplasm</keyword>
<keyword id="KW-0206">Cytoskeleton</keyword>
<keyword id="KW-0472">Membrane</keyword>
<keyword id="KW-0597">Phosphoprotein</keyword>
<keyword id="KW-1185">Reference proteome</keyword>
<keyword id="KW-0728">SH3 domain</keyword>
<proteinExistence type="evidence at transcript level"/>
<gene>
    <name type="primary">BAIAP2</name>
</gene>
<reference key="1">
    <citation type="journal article" date="2005" name="BMC Genomics">
        <title>Characterization of 954 bovine full-CDS cDNA sequences.</title>
        <authorList>
            <person name="Harhay G.P."/>
            <person name="Sonstegard T.S."/>
            <person name="Keele J.W."/>
            <person name="Heaton M.P."/>
            <person name="Clawson M.L."/>
            <person name="Snelling W.M."/>
            <person name="Wiedmann R.T."/>
            <person name="Van Tassell C.P."/>
            <person name="Smith T.P.L."/>
        </authorList>
    </citation>
    <scope>NUCLEOTIDE SEQUENCE [LARGE SCALE MRNA]</scope>
</reference>